<protein>
    <recommendedName>
        <fullName>Restriction of telomere capping protein 5</fullName>
    </recommendedName>
</protein>
<comment type="function">
    <text evidence="1">May be involved in a process influencing telomere capping.</text>
</comment>
<comment type="subcellular location">
    <subcellularLocation>
        <location evidence="1">Cytoplasm</location>
    </subcellularLocation>
</comment>
<comment type="similarity">
    <text evidence="4">Belongs to the RTC5 family.</text>
</comment>
<comment type="sequence caution" evidence="4">
    <conflict type="erroneous gene model prediction">
        <sequence resource="EMBL-CDS" id="EEH46945"/>
    </conflict>
</comment>
<evidence type="ECO:0000250" key="1"/>
<evidence type="ECO:0000255" key="2">
    <source>
        <dbReference type="PROSITE-ProRule" id="PRU01234"/>
    </source>
</evidence>
<evidence type="ECO:0000256" key="3">
    <source>
        <dbReference type="SAM" id="MobiDB-lite"/>
    </source>
</evidence>
<evidence type="ECO:0000305" key="4"/>
<gene>
    <name type="primary">RTC5</name>
    <name type="ORF">PADG_03043</name>
</gene>
<proteinExistence type="inferred from homology"/>
<feature type="chain" id="PRO_0000408835" description="Restriction of telomere capping protein 5">
    <location>
        <begin position="1"/>
        <end position="689"/>
    </location>
</feature>
<feature type="domain" description="TLDc" evidence="2">
    <location>
        <begin position="370"/>
        <end position="611"/>
    </location>
</feature>
<feature type="region of interest" description="Disordered" evidence="3">
    <location>
        <begin position="173"/>
        <end position="201"/>
    </location>
</feature>
<feature type="region of interest" description="Disordered" evidence="3">
    <location>
        <begin position="332"/>
        <end position="359"/>
    </location>
</feature>
<feature type="compositionally biased region" description="Pro residues" evidence="3">
    <location>
        <begin position="343"/>
        <end position="359"/>
    </location>
</feature>
<reference key="1">
    <citation type="journal article" date="2011" name="PLoS Genet.">
        <title>Comparative genomic analysis of human fungal pathogens causing paracoccidioidomycosis.</title>
        <authorList>
            <person name="Desjardins C.A."/>
            <person name="Champion M.D."/>
            <person name="Holder J.W."/>
            <person name="Muszewska A."/>
            <person name="Goldberg J."/>
            <person name="Bailao A.M."/>
            <person name="Brigido M.M."/>
            <person name="Ferreira M.E."/>
            <person name="Garcia A.M."/>
            <person name="Grynberg M."/>
            <person name="Gujja S."/>
            <person name="Heiman D.I."/>
            <person name="Henn M.R."/>
            <person name="Kodira C.D."/>
            <person name="Leon-Narvaez H."/>
            <person name="Longo L.V.G."/>
            <person name="Ma L.-J."/>
            <person name="Malavazi I."/>
            <person name="Matsuo A.L."/>
            <person name="Morais F.V."/>
            <person name="Pereira M."/>
            <person name="Rodriguez-Brito S."/>
            <person name="Sakthikumar S."/>
            <person name="Salem-Izacc S.M."/>
            <person name="Sykes S.M."/>
            <person name="Teixeira M.M."/>
            <person name="Vallejo M.C."/>
            <person name="Walter M.E."/>
            <person name="Yandava C."/>
            <person name="Young S."/>
            <person name="Zeng Q."/>
            <person name="Zucker J."/>
            <person name="Felipe M.S."/>
            <person name="Goldman G.H."/>
            <person name="Haas B.J."/>
            <person name="McEwen J.G."/>
            <person name="Nino-Vega G."/>
            <person name="Puccia R."/>
            <person name="San-Blas G."/>
            <person name="Soares C.M."/>
            <person name="Birren B.W."/>
            <person name="Cuomo C.A."/>
        </authorList>
    </citation>
    <scope>NUCLEOTIDE SEQUENCE [LARGE SCALE GENOMIC DNA]</scope>
    <source>
        <strain>Pb18</strain>
    </source>
</reference>
<keyword id="KW-0963">Cytoplasm</keyword>
<keyword id="KW-1185">Reference proteome</keyword>
<dbReference type="EMBL" id="KN275959">
    <property type="protein sequence ID" value="EEH46945.2"/>
    <property type="status" value="ALT_SEQ"/>
    <property type="molecule type" value="Genomic_DNA"/>
</dbReference>
<dbReference type="RefSeq" id="XP_010758245.1">
    <property type="nucleotide sequence ID" value="XM_010759943.1"/>
</dbReference>
<dbReference type="FunCoup" id="C1G788">
    <property type="interactions" value="6"/>
</dbReference>
<dbReference type="STRING" id="502780.C1G788"/>
<dbReference type="GeneID" id="22582415"/>
<dbReference type="KEGG" id="pbn:PADG_03043"/>
<dbReference type="eggNOG" id="ENOG502QV3R">
    <property type="taxonomic scope" value="Eukaryota"/>
</dbReference>
<dbReference type="HOGENOM" id="CLU_011918_1_0_1"/>
<dbReference type="InParanoid" id="C1G788"/>
<dbReference type="OrthoDB" id="18773at33183"/>
<dbReference type="Proteomes" id="UP000001628">
    <property type="component" value="Unassembled WGS sequence"/>
</dbReference>
<dbReference type="GO" id="GO:0005737">
    <property type="term" value="C:cytoplasm"/>
    <property type="evidence" value="ECO:0007669"/>
    <property type="project" value="UniProtKB-SubCell"/>
</dbReference>
<dbReference type="InterPro" id="IPR006571">
    <property type="entry name" value="TLDc_dom"/>
</dbReference>
<dbReference type="Pfam" id="PF07534">
    <property type="entry name" value="TLD"/>
    <property type="match status" value="1"/>
</dbReference>
<dbReference type="SMART" id="SM00584">
    <property type="entry name" value="TLDc"/>
    <property type="match status" value="1"/>
</dbReference>
<dbReference type="PROSITE" id="PS51886">
    <property type="entry name" value="TLDC"/>
    <property type="match status" value="1"/>
</dbReference>
<organism>
    <name type="scientific">Paracoccidioides brasiliensis (strain Pb18)</name>
    <dbReference type="NCBI Taxonomy" id="502780"/>
    <lineage>
        <taxon>Eukaryota</taxon>
        <taxon>Fungi</taxon>
        <taxon>Dikarya</taxon>
        <taxon>Ascomycota</taxon>
        <taxon>Pezizomycotina</taxon>
        <taxon>Eurotiomycetes</taxon>
        <taxon>Eurotiomycetidae</taxon>
        <taxon>Onygenales</taxon>
        <taxon>Ajellomycetaceae</taxon>
        <taxon>Paracoccidioides</taxon>
    </lineage>
</organism>
<sequence length="689" mass="74673">MGASQSTNGPGQKTTSVEELSKRLAYRFANKCFTPLELTHLKDNFFSRALDQGGIRYWNEEILSEFLGIPDGAGSAAYVTSDGSLDAGPVIFRMVSYLGAFPFHNTMAPSVLTFEAMVKVIVLLTERYGKVLKRGRKDRVKLLFGSLADVGRRDIVVQLQEAAEDSLELIGEAGPGSDRTFTHPTGFSVDKPAHDDDGEEDDDDLALAALESLDAIEIFKHDQRIDKTVYESKISINTFRRLLAFLMVTAPLRPLGTISKYTTGLSSSILETVNEQVESILAALALDDLEGGIGYKSFSELISTSLPYLFDPLTPLFEHLLFSKNLDVTRKRHSQSQNDPAAKPVPTPPSTPPSSPPLSPVILNGGFDSSILNPTLLSHLSFFLSTTAQIPNIFRNRTRLHPVFSSTEHGESLTSFSHHVMTWQAPSILLIKGVVTSESDEEQITTIGAYLPQPWKQSSSNSSRRSSDVPDQSTLPCLFELSPVHTVLQGSPSLSSLKPNMPITYFSTKTGIAIGCQIPPPSRKSLGADFLPKPSGGGSLLIDPALEVATLVISDGLNGEGVFLPPGISAHSASKSVSCTTLAASTASISASNHNTTKSISIYSLEVWGIIPSQSLSVQLDSPGSFVEKQDAITQQRAQWDFEAREAERRKVINMKVGVGELEEHSGRALLEMAGIVGDSQYSGLRHLR</sequence>
<accession>C1G788</accession>
<name>RTC5_PARBD</name>